<feature type="chain" id="PRO_0000145396" description="DNA topoisomerase 4 subunit A">
    <location>
        <begin position="1"/>
        <end position="759"/>
    </location>
</feature>
<feature type="domain" description="Topo IIA-type catalytic" evidence="2">
    <location>
        <begin position="44"/>
        <end position="516"/>
    </location>
</feature>
<feature type="active site" description="O-(5'-phospho-DNA)-tyrosine intermediate" evidence="1">
    <location>
        <position position="132"/>
    </location>
</feature>
<feature type="site" description="Interaction with DNA" evidence="1">
    <location>
        <position position="52"/>
    </location>
</feature>
<feature type="site" description="Interaction with DNA" evidence="1">
    <location>
        <position position="88"/>
    </location>
</feature>
<feature type="site" description="Interaction with DNA" evidence="1">
    <location>
        <position position="90"/>
    </location>
</feature>
<feature type="site" description="Transition state stabilizer" evidence="1">
    <location>
        <position position="131"/>
    </location>
</feature>
<feature type="sequence conflict" description="In Ref. 1; AAC38043 and 2; AAF14339." evidence="3" ref="1 2">
    <original>R</original>
    <variation>A</variation>
    <location>
        <position position="498"/>
    </location>
</feature>
<evidence type="ECO:0000255" key="1">
    <source>
        <dbReference type="HAMAP-Rule" id="MF_00936"/>
    </source>
</evidence>
<evidence type="ECO:0000255" key="2">
    <source>
        <dbReference type="PROSITE-ProRule" id="PRU01384"/>
    </source>
</evidence>
<evidence type="ECO:0000305" key="3"/>
<gene>
    <name evidence="1" type="primary">parC</name>
    <name type="ordered locus">CC_1566</name>
</gene>
<accession>O54478</accession>
<comment type="function">
    <text evidence="1">Topoisomerase IV is essential for chromosome segregation. It relaxes supercoiled DNA. Performs the decatenation events required during the replication of a circular DNA molecule.</text>
</comment>
<comment type="catalytic activity">
    <reaction evidence="1">
        <text>ATP-dependent breakage, passage and rejoining of double-stranded DNA.</text>
        <dbReference type="EC" id="5.6.2.2"/>
    </reaction>
</comment>
<comment type="subunit">
    <text>Heterotetramer composed of ParC and ParE.</text>
</comment>
<comment type="subcellular location">
    <subcellularLocation>
        <location evidence="1">Cell membrane</location>
        <topology evidence="1">Peripheral membrane protein</topology>
    </subcellularLocation>
</comment>
<comment type="similarity">
    <text evidence="1">Belongs to the type II topoisomerase GyrA/ParC subunit family. ParC type 1 subfamily.</text>
</comment>
<organism>
    <name type="scientific">Caulobacter vibrioides (strain ATCC 19089 / CIP 103742 / CB 15)</name>
    <name type="common">Caulobacter crescentus</name>
    <dbReference type="NCBI Taxonomy" id="190650"/>
    <lineage>
        <taxon>Bacteria</taxon>
        <taxon>Pseudomonadati</taxon>
        <taxon>Pseudomonadota</taxon>
        <taxon>Alphaproteobacteria</taxon>
        <taxon>Caulobacterales</taxon>
        <taxon>Caulobacteraceae</taxon>
        <taxon>Caulobacter</taxon>
    </lineage>
</organism>
<proteinExistence type="inferred from homology"/>
<name>PARC_CAUVC</name>
<dbReference type="EC" id="5.6.2.2" evidence="1"/>
<dbReference type="EMBL" id="U94696">
    <property type="protein sequence ID" value="AAC38043.1"/>
    <property type="molecule type" value="Genomic_DNA"/>
</dbReference>
<dbReference type="EMBL" id="U86302">
    <property type="protein sequence ID" value="AAF14339.1"/>
    <property type="molecule type" value="Genomic_DNA"/>
</dbReference>
<dbReference type="EMBL" id="AE005673">
    <property type="protein sequence ID" value="AAK23545.1"/>
    <property type="molecule type" value="Genomic_DNA"/>
</dbReference>
<dbReference type="PIR" id="E87443">
    <property type="entry name" value="E87443"/>
</dbReference>
<dbReference type="RefSeq" id="NP_420377.1">
    <property type="nucleotide sequence ID" value="NC_002696.2"/>
</dbReference>
<dbReference type="RefSeq" id="WP_010919440.1">
    <property type="nucleotide sequence ID" value="NC_002696.2"/>
</dbReference>
<dbReference type="SMR" id="O54478"/>
<dbReference type="STRING" id="190650.CC_1566"/>
<dbReference type="EnsemblBacteria" id="AAK23545">
    <property type="protein sequence ID" value="AAK23545"/>
    <property type="gene ID" value="CC_1566"/>
</dbReference>
<dbReference type="KEGG" id="ccr:CC_1566"/>
<dbReference type="PATRIC" id="fig|190650.5.peg.1594"/>
<dbReference type="eggNOG" id="COG0188">
    <property type="taxonomic scope" value="Bacteria"/>
</dbReference>
<dbReference type="HOGENOM" id="CLU_002977_4_1_5"/>
<dbReference type="BioCyc" id="CAULO:CC1566-MONOMER"/>
<dbReference type="Proteomes" id="UP000001816">
    <property type="component" value="Chromosome"/>
</dbReference>
<dbReference type="GO" id="GO:0005694">
    <property type="term" value="C:chromosome"/>
    <property type="evidence" value="ECO:0007669"/>
    <property type="project" value="InterPro"/>
</dbReference>
<dbReference type="GO" id="GO:0005737">
    <property type="term" value="C:cytoplasm"/>
    <property type="evidence" value="ECO:0007669"/>
    <property type="project" value="TreeGrafter"/>
</dbReference>
<dbReference type="GO" id="GO:0009330">
    <property type="term" value="C:DNA topoisomerase type II (double strand cut, ATP-hydrolyzing) complex"/>
    <property type="evidence" value="ECO:0007669"/>
    <property type="project" value="TreeGrafter"/>
</dbReference>
<dbReference type="GO" id="GO:0019897">
    <property type="term" value="C:extrinsic component of plasma membrane"/>
    <property type="evidence" value="ECO:0007669"/>
    <property type="project" value="UniProtKB-UniRule"/>
</dbReference>
<dbReference type="GO" id="GO:0005524">
    <property type="term" value="F:ATP binding"/>
    <property type="evidence" value="ECO:0007669"/>
    <property type="project" value="InterPro"/>
</dbReference>
<dbReference type="GO" id="GO:0003677">
    <property type="term" value="F:DNA binding"/>
    <property type="evidence" value="ECO:0007669"/>
    <property type="project" value="UniProtKB-UniRule"/>
</dbReference>
<dbReference type="GO" id="GO:0003918">
    <property type="term" value="F:DNA topoisomerase type II (double strand cut, ATP-hydrolyzing) activity"/>
    <property type="evidence" value="ECO:0007669"/>
    <property type="project" value="UniProtKB-UniRule"/>
</dbReference>
<dbReference type="GO" id="GO:0007059">
    <property type="term" value="P:chromosome segregation"/>
    <property type="evidence" value="ECO:0007669"/>
    <property type="project" value="UniProtKB-UniRule"/>
</dbReference>
<dbReference type="GO" id="GO:0006265">
    <property type="term" value="P:DNA topological change"/>
    <property type="evidence" value="ECO:0007669"/>
    <property type="project" value="UniProtKB-UniRule"/>
</dbReference>
<dbReference type="CDD" id="cd00187">
    <property type="entry name" value="TOP4c"/>
    <property type="match status" value="1"/>
</dbReference>
<dbReference type="FunFam" id="1.10.268.10:FF:000001">
    <property type="entry name" value="DNA gyrase subunit A"/>
    <property type="match status" value="1"/>
</dbReference>
<dbReference type="Gene3D" id="3.30.1360.40">
    <property type="match status" value="1"/>
</dbReference>
<dbReference type="Gene3D" id="2.120.10.90">
    <property type="entry name" value="DNA gyrase/topoisomerase IV, subunit A, C-terminal"/>
    <property type="match status" value="1"/>
</dbReference>
<dbReference type="Gene3D" id="3.90.199.10">
    <property type="entry name" value="Topoisomerase II, domain 5"/>
    <property type="match status" value="1"/>
</dbReference>
<dbReference type="Gene3D" id="1.10.268.10">
    <property type="entry name" value="Topoisomerase, domain 3"/>
    <property type="match status" value="1"/>
</dbReference>
<dbReference type="HAMAP" id="MF_00936">
    <property type="entry name" value="ParC_type1"/>
    <property type="match status" value="1"/>
</dbReference>
<dbReference type="InterPro" id="IPR006691">
    <property type="entry name" value="GyrA/parC_rep"/>
</dbReference>
<dbReference type="InterPro" id="IPR035516">
    <property type="entry name" value="Gyrase/topoIV_suA_C"/>
</dbReference>
<dbReference type="InterPro" id="IPR013760">
    <property type="entry name" value="Topo_IIA-like_dom_sf"/>
</dbReference>
<dbReference type="InterPro" id="IPR013758">
    <property type="entry name" value="Topo_IIA_A/C_ab"/>
</dbReference>
<dbReference type="InterPro" id="IPR013757">
    <property type="entry name" value="Topo_IIA_A_a_sf"/>
</dbReference>
<dbReference type="InterPro" id="IPR002205">
    <property type="entry name" value="Topo_IIA_dom_A"/>
</dbReference>
<dbReference type="InterPro" id="IPR005742">
    <property type="entry name" value="TopoIV_A_Gneg"/>
</dbReference>
<dbReference type="InterPro" id="IPR050220">
    <property type="entry name" value="Type_II_DNA_Topoisomerases"/>
</dbReference>
<dbReference type="NCBIfam" id="TIGR01062">
    <property type="entry name" value="parC_Gneg"/>
    <property type="match status" value="1"/>
</dbReference>
<dbReference type="NCBIfam" id="NF004044">
    <property type="entry name" value="PRK05561.1"/>
    <property type="match status" value="1"/>
</dbReference>
<dbReference type="PANTHER" id="PTHR43493">
    <property type="entry name" value="DNA GYRASE/TOPOISOMERASE SUBUNIT A"/>
    <property type="match status" value="1"/>
</dbReference>
<dbReference type="PANTHER" id="PTHR43493:SF1">
    <property type="entry name" value="DNA TOPOISOMERASE 4 SUBUNIT A"/>
    <property type="match status" value="1"/>
</dbReference>
<dbReference type="Pfam" id="PF03989">
    <property type="entry name" value="DNA_gyraseA_C"/>
    <property type="match status" value="3"/>
</dbReference>
<dbReference type="Pfam" id="PF00521">
    <property type="entry name" value="DNA_topoisoIV"/>
    <property type="match status" value="1"/>
</dbReference>
<dbReference type="SMART" id="SM00434">
    <property type="entry name" value="TOP4c"/>
    <property type="match status" value="1"/>
</dbReference>
<dbReference type="SUPFAM" id="SSF101904">
    <property type="entry name" value="GyrA/ParC C-terminal domain-like"/>
    <property type="match status" value="1"/>
</dbReference>
<dbReference type="SUPFAM" id="SSF56719">
    <property type="entry name" value="Type II DNA topoisomerase"/>
    <property type="match status" value="1"/>
</dbReference>
<dbReference type="PROSITE" id="PS52040">
    <property type="entry name" value="TOPO_IIA"/>
    <property type="match status" value="1"/>
</dbReference>
<reference key="1">
    <citation type="journal article" date="1997" name="Mol. Microbiol.">
        <title>Requirement of topoisomerase IV parC and parE genes for cell cycle progression and developmental regulation in Caulobacter crescentus.</title>
        <authorList>
            <person name="Ward D.V."/>
            <person name="Newton A."/>
        </authorList>
    </citation>
    <scope>NUCLEOTIDE SEQUENCE [GENOMIC DNA]</scope>
    <source>
        <strain>ATCC 19089 / CIP 103742 / CB 15</strain>
    </source>
</reference>
<reference key="2">
    <citation type="submission" date="1997-01" db="EMBL/GenBank/DDBJ databases">
        <authorList>
            <person name="Ward D.V."/>
            <person name="Newton A."/>
        </authorList>
    </citation>
    <scope>NUCLEOTIDE SEQUENCE [GENOMIC DNA]</scope>
    <source>
        <strain>ATCC 19089 / CIP 103742 / CB 15</strain>
    </source>
</reference>
<reference key="3">
    <citation type="journal article" date="2001" name="Proc. Natl. Acad. Sci. U.S.A.">
        <title>Complete genome sequence of Caulobacter crescentus.</title>
        <authorList>
            <person name="Nierman W.C."/>
            <person name="Feldblyum T.V."/>
            <person name="Laub M.T."/>
            <person name="Paulsen I.T."/>
            <person name="Nelson K.E."/>
            <person name="Eisen J.A."/>
            <person name="Heidelberg J.F."/>
            <person name="Alley M.R.K."/>
            <person name="Ohta N."/>
            <person name="Maddock J.R."/>
            <person name="Potocka I."/>
            <person name="Nelson W.C."/>
            <person name="Newton A."/>
            <person name="Stephens C."/>
            <person name="Phadke N.D."/>
            <person name="Ely B."/>
            <person name="DeBoy R.T."/>
            <person name="Dodson R.J."/>
            <person name="Durkin A.S."/>
            <person name="Gwinn M.L."/>
            <person name="Haft D.H."/>
            <person name="Kolonay J.F."/>
            <person name="Smit J."/>
            <person name="Craven M.B."/>
            <person name="Khouri H.M."/>
            <person name="Shetty J."/>
            <person name="Berry K.J."/>
            <person name="Utterback T.R."/>
            <person name="Tran K."/>
            <person name="Wolf A.M."/>
            <person name="Vamathevan J.J."/>
            <person name="Ermolaeva M.D."/>
            <person name="White O."/>
            <person name="Salzberg S.L."/>
            <person name="Venter J.C."/>
            <person name="Shapiro L."/>
            <person name="Fraser C.M."/>
        </authorList>
    </citation>
    <scope>NUCLEOTIDE SEQUENCE [LARGE SCALE GENOMIC DNA]</scope>
    <source>
        <strain>ATCC 19089 / CIP 103742 / CB 15</strain>
    </source>
</reference>
<protein>
    <recommendedName>
        <fullName evidence="1">DNA topoisomerase 4 subunit A</fullName>
        <ecNumber evidence="1">5.6.2.2</ecNumber>
    </recommendedName>
    <alternativeName>
        <fullName evidence="1">Topoisomerase IV subunit A</fullName>
    </alternativeName>
</protein>
<keyword id="KW-1003">Cell membrane</keyword>
<keyword id="KW-0238">DNA-binding</keyword>
<keyword id="KW-0413">Isomerase</keyword>
<keyword id="KW-0472">Membrane</keyword>
<keyword id="KW-1185">Reference proteome</keyword>
<keyword id="KW-0799">Topoisomerase</keyword>
<sequence length="759" mass="83521">MNKPVLPPPGGPDDGDRILDEPLTEALSRRYLAYALSTIGSRALPDVRDGLKPVHRRVLYAMSNMRLNPDAAARKCAKVVGEVMGNFHPHGDASIYDALVRLAQEFSQRIPLVEGQGNFGNIDGDSAAAMRYTECKMTEAAMLLLDGIDEDAVDFRPTYDGQDEEPVVLPSGFPNLLANGSSGIAVGMATSIPPHNAAELIDACQLLLANPDATTADLLEKVPGPDFPTGGVIVESRASLLETYETGRGGVRMRAKWEKEDTGRGTYQIVVTEIPYQVKKSDLVEQLADLIDSKKAALLGDVRDESAEDIRLVLEPKSKNVEPEVLMESLFKLSALESRFPVNINVLDARGTPGVMGIKQALMAFLAHRREVLTRRARHRLAKIEARLHILDGLLIAYLNLDEVIRIVRYEDKPKEKLIETFGLTDIQADAILNTRLRQLAKLEEMEIRREHAELVEERDGILAMLASEAKQWKLVGVGLSEVRAALLKIKHPLDKPRPTGVTGRSVFGEAPQVDADAAIEAMIVREPITIILSERGWIRAAKGKIDDPSELKFKEGDKLGFLVPAETTDKLLIFSSDGRFFTLGCDKLPSARGHGEPVRMMIELDDKVKIIDVFPFKAGRKRILASKGGYGFLMPEEEALANRKAGKQVLNVGNEGAAFCLEAVGDQLAVIGDNGKILIFPLEELPEMPRGKGVKLQAYREGGLRDGLSFNAETGAYWIDTAGRRRDWAEWKEWVGRRAGAGKLVPKGFATNKRFRPK</sequence>